<accession>Q5R7U0</accession>
<keyword id="KW-0597">Phosphoprotein</keyword>
<keyword id="KW-1185">Reference proteome</keyword>
<feature type="chain" id="PRO_0000239055" description="G-protein coupled receptor-associated sorting protein 2">
    <location>
        <begin position="1"/>
        <end position="838"/>
    </location>
</feature>
<feature type="region of interest" description="Disordered" evidence="3">
    <location>
        <begin position="1"/>
        <end position="121"/>
    </location>
</feature>
<feature type="region of interest" description="Disordered" evidence="3">
    <location>
        <begin position="218"/>
        <end position="293"/>
    </location>
</feature>
<feature type="region of interest" description="Disordered" evidence="3">
    <location>
        <begin position="531"/>
        <end position="552"/>
    </location>
</feature>
<feature type="compositionally biased region" description="Basic and acidic residues" evidence="3">
    <location>
        <begin position="13"/>
        <end position="31"/>
    </location>
</feature>
<feature type="compositionally biased region" description="Polar residues" evidence="3">
    <location>
        <begin position="220"/>
        <end position="235"/>
    </location>
</feature>
<feature type="compositionally biased region" description="Basic residues" evidence="3">
    <location>
        <begin position="255"/>
        <end position="271"/>
    </location>
</feature>
<feature type="compositionally biased region" description="Polar residues" evidence="3">
    <location>
        <begin position="542"/>
        <end position="552"/>
    </location>
</feature>
<feature type="modified residue" description="Phosphoserine" evidence="2">
    <location>
        <position position="282"/>
    </location>
</feature>
<feature type="modified residue" description="Phosphoserine" evidence="2">
    <location>
        <position position="284"/>
    </location>
</feature>
<protein>
    <recommendedName>
        <fullName>G-protein coupled receptor-associated sorting protein 2</fullName>
        <shortName>GASP-2</shortName>
    </recommendedName>
</protein>
<evidence type="ECO:0000250" key="1"/>
<evidence type="ECO:0000250" key="2">
    <source>
        <dbReference type="UniProtKB" id="Q8BUY8"/>
    </source>
</evidence>
<evidence type="ECO:0000256" key="3">
    <source>
        <dbReference type="SAM" id="MobiDB-lite"/>
    </source>
</evidence>
<evidence type="ECO:0000305" key="4"/>
<organism>
    <name type="scientific">Pongo abelii</name>
    <name type="common">Sumatran orangutan</name>
    <name type="synonym">Pongo pygmaeus abelii</name>
    <dbReference type="NCBI Taxonomy" id="9601"/>
    <lineage>
        <taxon>Eukaryota</taxon>
        <taxon>Metazoa</taxon>
        <taxon>Chordata</taxon>
        <taxon>Craniata</taxon>
        <taxon>Vertebrata</taxon>
        <taxon>Euteleostomi</taxon>
        <taxon>Mammalia</taxon>
        <taxon>Eutheria</taxon>
        <taxon>Euarchontoglires</taxon>
        <taxon>Primates</taxon>
        <taxon>Haplorrhini</taxon>
        <taxon>Catarrhini</taxon>
        <taxon>Hominidae</taxon>
        <taxon>Pongo</taxon>
    </lineage>
</organism>
<dbReference type="EMBL" id="CR860019">
    <property type="protein sequence ID" value="CAH92170.1"/>
    <property type="molecule type" value="mRNA"/>
</dbReference>
<dbReference type="RefSeq" id="NP_001126271.1">
    <property type="nucleotide sequence ID" value="NM_001132799.1"/>
</dbReference>
<dbReference type="RefSeq" id="XP_009233350.1">
    <property type="nucleotide sequence ID" value="XM_009235075.1"/>
</dbReference>
<dbReference type="RefSeq" id="XP_063577074.1">
    <property type="nucleotide sequence ID" value="XM_063721004.1"/>
</dbReference>
<dbReference type="SMR" id="Q5R7U0"/>
<dbReference type="FunCoup" id="Q5R7U0">
    <property type="interactions" value="587"/>
</dbReference>
<dbReference type="STRING" id="9601.ENSPPYP00000023025"/>
<dbReference type="Ensembl" id="ENSPPYT00000023994.3">
    <property type="protein sequence ID" value="ENSPPYP00000023025.2"/>
    <property type="gene ID" value="ENSPPYG00000020569.3"/>
</dbReference>
<dbReference type="Ensembl" id="ENSPPYT00000047281.1">
    <property type="protein sequence ID" value="ENSPPYP00000043869.1"/>
    <property type="gene ID" value="ENSPPYG00000020569.3"/>
</dbReference>
<dbReference type="GeneID" id="100173243"/>
<dbReference type="KEGG" id="pon:100173243"/>
<dbReference type="CTD" id="114928"/>
<dbReference type="eggNOG" id="ENOG502S6CE">
    <property type="taxonomic scope" value="Eukaryota"/>
</dbReference>
<dbReference type="GeneTree" id="ENSGT00940000162726"/>
<dbReference type="HOGENOM" id="CLU_017437_0_0_1"/>
<dbReference type="InParanoid" id="Q5R7U0"/>
<dbReference type="OMA" id="WPREEAN"/>
<dbReference type="OrthoDB" id="9832412at2759"/>
<dbReference type="TreeFam" id="TF335652"/>
<dbReference type="Proteomes" id="UP000001595">
    <property type="component" value="Chromosome X"/>
</dbReference>
<dbReference type="GO" id="GO:0005829">
    <property type="term" value="C:cytosol"/>
    <property type="evidence" value="ECO:0007669"/>
    <property type="project" value="TreeGrafter"/>
</dbReference>
<dbReference type="GO" id="GO:0005634">
    <property type="term" value="C:nucleus"/>
    <property type="evidence" value="ECO:0007669"/>
    <property type="project" value="Ensembl"/>
</dbReference>
<dbReference type="GO" id="GO:0001540">
    <property type="term" value="F:amyloid-beta binding"/>
    <property type="evidence" value="ECO:0007669"/>
    <property type="project" value="Ensembl"/>
</dbReference>
<dbReference type="GO" id="GO:0001664">
    <property type="term" value="F:G protein-coupled receptor binding"/>
    <property type="evidence" value="ECO:0007669"/>
    <property type="project" value="Ensembl"/>
</dbReference>
<dbReference type="GO" id="GO:0061484">
    <property type="term" value="P:hematopoietic stem cell homeostasis"/>
    <property type="evidence" value="ECO:0007669"/>
    <property type="project" value="Ensembl"/>
</dbReference>
<dbReference type="FunFam" id="1.25.10.10:FF:000258">
    <property type="entry name" value="G-protein coupled receptor-associated sorting protein 2"/>
    <property type="match status" value="1"/>
</dbReference>
<dbReference type="Gene3D" id="1.25.10.10">
    <property type="entry name" value="Leucine-rich Repeat Variant"/>
    <property type="match status" value="1"/>
</dbReference>
<dbReference type="InterPro" id="IPR011989">
    <property type="entry name" value="ARM-like"/>
</dbReference>
<dbReference type="InterPro" id="IPR006911">
    <property type="entry name" value="ARM-rpt_dom"/>
</dbReference>
<dbReference type="InterPro" id="IPR016024">
    <property type="entry name" value="ARM-type_fold"/>
</dbReference>
<dbReference type="InterPro" id="IPR043374">
    <property type="entry name" value="GASP1-3"/>
</dbReference>
<dbReference type="PANTHER" id="PTHR46414">
    <property type="entry name" value="PROTEIN BHLHB9-RELATED"/>
    <property type="match status" value="1"/>
</dbReference>
<dbReference type="Pfam" id="PF04826">
    <property type="entry name" value="Arm_2"/>
    <property type="match status" value="1"/>
</dbReference>
<dbReference type="SUPFAM" id="SSF48371">
    <property type="entry name" value="ARM repeat"/>
    <property type="match status" value="1"/>
</dbReference>
<gene>
    <name type="primary">GPRASP2</name>
</gene>
<name>GASP2_PONAB</name>
<proteinExistence type="evidence at transcript level"/>
<sequence>MTGAEIEPSAQAKPEKKAGEEVVAGPERENDVPLVVRPKVRTQATTGARPKTETKSVPAARPKTEAQAMSGARPKTEAQVMGGARPKTEAQGMAGARPKTDARAVGGARSKTDAKAIPGARPEDEAQAWAQSEFGTEAVSQAEGVSQTNAVAWPLATAESGSVTKSKGLSMDRELVNVDAETFPGTQGQKGIQPWFGPGEETNMGSWCYSRPRAREEASNESGFWSADETSTASSFWAGEETSVRSWPREESNTRSRHRAKHQTNPRSRPRSKQEAYVDSWSGSEDEAGNPFSFWAGENTNNLFRPRVREEANIRSKLRTNREDCFESESEDEFYKQSWVLPGEEADSRFRHRDKEDPNTALKLRAQKDVDSDRVKQEPRFEEEVIIGSWFWAEKETSLEGGASAICESEPGTEEGAIGGSAYWAEEKSSLGAVAREEAKPESEEEAIFGSWFWDRDEACFDLNPCPVYKVSDRFRDAAEELNASSRPQTWDEVTVEFKPGLFHGVGFRSTSPFRIPEEASEMLEAKPKNLELSPEGEEQESLLQPDQPSPEFTFQYDPSYRSVREIREHLRARESAESESWSCSCIQCELKIGSEEFEELLLLMDKIRDPFIHEISKIAMGMRSASQFTRDFIRDSGVVSLIETLLNYPSSRVRTSFLENMIHMAPPYPNLNMIETFICQVCEETLAHSVDSLEQLTGIRMLRHLTMTIDYHTLIANYMSGFLSLLTTANARTKFHVLKMLLNLSENPAVAKKLFSAKALSIFVGLFNIEETNDNIQIVIKMFQNISNIIKSGKMSLIDDDFSLEPLISAFREFEELAKQLQAQIDNQNDPEVGQQS</sequence>
<comment type="function">
    <text evidence="1">May play a role in regulation of a variety of G-protein coupled receptors.</text>
</comment>
<comment type="subunit">
    <text evidence="1">Interacts with cytoplasmic tails of a variety of G protein-coupled receptors such as muscarinic acetylcholine receptor M1/CHRM1 and calcitonin receptor/CALCR.</text>
</comment>
<comment type="similarity">
    <text evidence="4">Belongs to the GPRASP family.</text>
</comment>
<reference key="1">
    <citation type="submission" date="2004-11" db="EMBL/GenBank/DDBJ databases">
        <authorList>
            <consortium name="The German cDNA consortium"/>
        </authorList>
    </citation>
    <scope>NUCLEOTIDE SEQUENCE [LARGE SCALE MRNA]</scope>
    <source>
        <tissue>Brain cortex</tissue>
    </source>
</reference>